<reference evidence="5" key="1">
    <citation type="journal article" date="2015" name="Toxicon">
        <title>Recombinant expression and predicted structure of parborlysin, a cytolytic protein from the Antarctic heteronemertine Parborlasia corrugatus.</title>
        <authorList>
            <person name="Butala M."/>
            <person name="Sega D."/>
            <person name="Tomc B."/>
            <person name="Podlesek Z."/>
            <person name="Kem W.R."/>
            <person name="Kupper F.C."/>
            <person name="Turk T."/>
        </authorList>
    </citation>
    <scope>NUCLEOTIDE SEQUENCE [MRNA]</scope>
    <scope>RECOMBINANT EXPRESSION IN E.COLI</scope>
    <scope>3D-STRUCTURE MODELING</scope>
</reference>
<dbReference type="EMBL" id="KT693314">
    <property type="protein sequence ID" value="ALI86905.1"/>
    <property type="molecule type" value="mRNA"/>
</dbReference>
<dbReference type="GO" id="GO:0005576">
    <property type="term" value="C:extracellular region"/>
    <property type="evidence" value="ECO:0007669"/>
    <property type="project" value="UniProtKB-SubCell"/>
</dbReference>
<dbReference type="GO" id="GO:0090729">
    <property type="term" value="F:toxin activity"/>
    <property type="evidence" value="ECO:0007669"/>
    <property type="project" value="UniProtKB-KW"/>
</dbReference>
<dbReference type="GO" id="GO:0031640">
    <property type="term" value="P:killing of cells of another organism"/>
    <property type="evidence" value="ECO:0007669"/>
    <property type="project" value="UniProtKB-KW"/>
</dbReference>
<accession>A0A0P0BQD2</accession>
<organism>
    <name type="scientific">Parborlasia corrugatus</name>
    <name type="common">Antarctic nemertean worm</name>
    <dbReference type="NCBI Taxonomy" id="187802"/>
    <lineage>
        <taxon>Eukaryota</taxon>
        <taxon>Metazoa</taxon>
        <taxon>Spiralia</taxon>
        <taxon>Lophotrochozoa</taxon>
        <taxon>Nemertea</taxon>
        <taxon>Pilidiophora</taxon>
        <taxon>Heteronemertea</taxon>
        <taxon>Lineidae</taxon>
        <taxon>Parborlasia</taxon>
    </lineage>
</organism>
<sequence>GWPAYPGRNGIRSSVCQKKLGCGWRKLASLPVCKAFCLARKRFWQKCGKNGSSGKGSKICKSVIAHTFEKAGKGLIKLTDMAVATIIKYAGKK</sequence>
<proteinExistence type="inferred from homology"/>
<name>CXP1_PARCG</name>
<comment type="function">
    <text evidence="1 4">Cytolysin that shows hemolytic activity (on bovine erythrocytes, HC(50)=5.75 mg/ml) (By similarity). This hemolytic activity is completely inhibited by small unilamelar vesicles composed of PC/PG, PC/PI and PC/PS in 1:1 molar ratios (with at least 100 mg/ml concentration) (By similarity). The recombinant protein does not show hemolytic activity, suggesting that it is not properly folded or that it requires a free N-terminal end for its activity (Probable).</text>
</comment>
<comment type="subcellular location">
    <subcellularLocation>
        <location evidence="4">Secreted</location>
    </subcellularLocation>
</comment>
<comment type="tissue specificity">
    <text evidence="4">Localized within the skin and proboscis and are most readily isolated from body mucus secretions.</text>
</comment>
<comment type="similarity">
    <text evidence="3">Belongs to the worm cytolysin family.</text>
</comment>
<keyword id="KW-0204">Cytolysis</keyword>
<keyword id="KW-1015">Disulfide bond</keyword>
<keyword id="KW-0354">Hemolysis</keyword>
<keyword id="KW-0964">Secreted</keyword>
<keyword id="KW-0800">Toxin</keyword>
<feature type="chain" id="PRO_0000454510" description="Parbolysin P1" evidence="4">
    <location>
        <begin position="1"/>
        <end position="93"/>
    </location>
</feature>
<feature type="disulfide bond" evidence="4">
    <location>
        <begin position="16"/>
        <end position="37"/>
    </location>
</feature>
<feature type="disulfide bond" evidence="4">
    <location>
        <begin position="22"/>
        <end position="33"/>
    </location>
</feature>
<feature type="disulfide bond" evidence="4">
    <location>
        <begin position="47"/>
        <end position="60"/>
    </location>
</feature>
<protein>
    <recommendedName>
        <fullName evidence="2">Parbolysin P1</fullName>
    </recommendedName>
    <alternativeName>
        <fullName>Parbolysin 1</fullName>
    </alternativeName>
</protein>
<evidence type="ECO:0000250" key="1">
    <source>
        <dbReference type="UniProtKB" id="A0A0N7HUN6"/>
    </source>
</evidence>
<evidence type="ECO:0000303" key="2">
    <source>
    </source>
</evidence>
<evidence type="ECO:0000305" key="3"/>
<evidence type="ECO:0000305" key="4">
    <source>
    </source>
</evidence>
<evidence type="ECO:0000312" key="5">
    <source>
        <dbReference type="EMBL" id="ALI86905.1"/>
    </source>
</evidence>